<gene>
    <name type="primary">feoB</name>
    <name type="ordered locus">Z4764</name>
    <name type="ordered locus">ECs4251</name>
</gene>
<comment type="function">
    <text evidence="1">Probable transporter of a GTP-driven Fe(2+) uptake system.</text>
</comment>
<comment type="subcellular location">
    <subcellularLocation>
        <location evidence="1">Cell inner membrane</location>
        <topology evidence="1">Multi-pass membrane protein</topology>
    </subcellularLocation>
</comment>
<comment type="induction">
    <text evidence="1">Iron uptake is repressed by the global regulator Fur.</text>
</comment>
<comment type="similarity">
    <text evidence="3">Belongs to the TRAFAC class TrmE-Era-EngA-EngB-Septin-like GTPase superfamily. FeoB GTPase (TC 9.A.8) family.</text>
</comment>
<feature type="chain" id="PRO_0000210822" description="Fe(2+) transporter FeoB">
    <location>
        <begin position="1"/>
        <end position="773"/>
    </location>
</feature>
<feature type="transmembrane region" description="Helical" evidence="2">
    <location>
        <begin position="282"/>
        <end position="302"/>
    </location>
</feature>
<feature type="transmembrane region" description="Helical" evidence="2">
    <location>
        <begin position="309"/>
        <end position="329"/>
    </location>
</feature>
<feature type="transmembrane region" description="Helical" evidence="2">
    <location>
        <begin position="344"/>
        <end position="366"/>
    </location>
</feature>
<feature type="transmembrane region" description="Helical" evidence="2">
    <location>
        <begin position="383"/>
        <end position="403"/>
    </location>
</feature>
<feature type="transmembrane region" description="Helical" evidence="2">
    <location>
        <begin position="427"/>
        <end position="447"/>
    </location>
</feature>
<feature type="transmembrane region" description="Helical" evidence="2">
    <location>
        <begin position="453"/>
        <end position="473"/>
    </location>
</feature>
<feature type="transmembrane region" description="Helical" evidence="2">
    <location>
        <begin position="518"/>
        <end position="538"/>
    </location>
</feature>
<feature type="transmembrane region" description="Helical" evidence="2">
    <location>
        <begin position="664"/>
        <end position="684"/>
    </location>
</feature>
<feature type="transmembrane region" description="Helical" evidence="2">
    <location>
        <begin position="691"/>
        <end position="711"/>
    </location>
</feature>
<feature type="transmembrane region" description="Helical" evidence="2">
    <location>
        <begin position="722"/>
        <end position="742"/>
    </location>
</feature>
<feature type="domain" description="FeoB-type G" evidence="3">
    <location>
        <begin position="3"/>
        <end position="169"/>
    </location>
</feature>
<feature type="binding site" evidence="3">
    <location>
        <begin position="10"/>
        <end position="17"/>
    </location>
    <ligand>
        <name>GTP</name>
        <dbReference type="ChEBI" id="CHEBI:37565"/>
        <label>1</label>
    </ligand>
</feature>
<feature type="binding site" evidence="3">
    <location>
        <begin position="35"/>
        <end position="39"/>
    </location>
    <ligand>
        <name>GTP</name>
        <dbReference type="ChEBI" id="CHEBI:37565"/>
        <label>2</label>
    </ligand>
</feature>
<feature type="binding site" evidence="3">
    <location>
        <begin position="56"/>
        <end position="59"/>
    </location>
    <ligand>
        <name>GTP</name>
        <dbReference type="ChEBI" id="CHEBI:37565"/>
        <label>3</label>
    </ligand>
</feature>
<feature type="binding site" evidence="3">
    <location>
        <begin position="120"/>
        <end position="123"/>
    </location>
    <ligand>
        <name>GTP</name>
        <dbReference type="ChEBI" id="CHEBI:37565"/>
    </ligand>
</feature>
<feature type="binding site" evidence="3">
    <location>
        <begin position="149"/>
        <end position="151"/>
    </location>
    <ligand>
        <name>GTP</name>
        <dbReference type="ChEBI" id="CHEBI:37565"/>
    </ligand>
</feature>
<accession>Q8XED4</accession>
<accession>Q7AAB3</accession>
<proteinExistence type="inferred from homology"/>
<protein>
    <recommendedName>
        <fullName evidence="4">Fe(2+) transporter FeoB</fullName>
    </recommendedName>
    <alternativeName>
        <fullName>Ferrous iron transport protein B</fullName>
    </alternativeName>
</protein>
<dbReference type="EMBL" id="AE005174">
    <property type="protein sequence ID" value="AAG58510.1"/>
    <property type="molecule type" value="Genomic_DNA"/>
</dbReference>
<dbReference type="EMBL" id="BA000007">
    <property type="protein sequence ID" value="BAB37674.2"/>
    <property type="molecule type" value="Genomic_DNA"/>
</dbReference>
<dbReference type="PIR" id="B86006">
    <property type="entry name" value="B86006"/>
</dbReference>
<dbReference type="PIR" id="C91160">
    <property type="entry name" value="C91160"/>
</dbReference>
<dbReference type="RefSeq" id="NP_312278.1">
    <property type="nucleotide sequence ID" value="NC_002695.1"/>
</dbReference>
<dbReference type="RefSeq" id="WP_000737014.1">
    <property type="nucleotide sequence ID" value="NZ_VOAI01000004.1"/>
</dbReference>
<dbReference type="SMR" id="Q8XED4"/>
<dbReference type="STRING" id="155864.Z4764"/>
<dbReference type="GeneID" id="75173566"/>
<dbReference type="GeneID" id="915892"/>
<dbReference type="KEGG" id="ece:Z4764"/>
<dbReference type="KEGG" id="ecs:ECs_4251"/>
<dbReference type="PATRIC" id="fig|386585.9.peg.4440"/>
<dbReference type="eggNOG" id="COG0370">
    <property type="taxonomic scope" value="Bacteria"/>
</dbReference>
<dbReference type="HOGENOM" id="CLU_013350_3_0_6"/>
<dbReference type="OMA" id="YAFAMQC"/>
<dbReference type="Proteomes" id="UP000000558">
    <property type="component" value="Chromosome"/>
</dbReference>
<dbReference type="Proteomes" id="UP000002519">
    <property type="component" value="Chromosome"/>
</dbReference>
<dbReference type="GO" id="GO:0005886">
    <property type="term" value="C:plasma membrane"/>
    <property type="evidence" value="ECO:0007669"/>
    <property type="project" value="UniProtKB-SubCell"/>
</dbReference>
<dbReference type="GO" id="GO:0015093">
    <property type="term" value="F:ferrous iron transmembrane transporter activity"/>
    <property type="evidence" value="ECO:0007669"/>
    <property type="project" value="InterPro"/>
</dbReference>
<dbReference type="GO" id="GO:0005525">
    <property type="term" value="F:GTP binding"/>
    <property type="evidence" value="ECO:0007669"/>
    <property type="project" value="UniProtKB-KW"/>
</dbReference>
<dbReference type="CDD" id="cd01879">
    <property type="entry name" value="FeoB"/>
    <property type="match status" value="1"/>
</dbReference>
<dbReference type="FunFam" id="1.10.287.1770:FF:000001">
    <property type="entry name" value="Ferrous iron transport protein B"/>
    <property type="match status" value="1"/>
</dbReference>
<dbReference type="FunFam" id="3.40.50.300:FF:000426">
    <property type="entry name" value="Ferrous iron transport protein B"/>
    <property type="match status" value="1"/>
</dbReference>
<dbReference type="Gene3D" id="1.10.287.1770">
    <property type="match status" value="1"/>
</dbReference>
<dbReference type="Gene3D" id="3.40.50.300">
    <property type="entry name" value="P-loop containing nucleotide triphosphate hydrolases"/>
    <property type="match status" value="1"/>
</dbReference>
<dbReference type="InterPro" id="IPR003373">
    <property type="entry name" value="Fe2_transport_prot-B"/>
</dbReference>
<dbReference type="InterPro" id="IPR011640">
    <property type="entry name" value="Fe2_transport_prot_B_C"/>
</dbReference>
<dbReference type="InterPro" id="IPR041069">
    <property type="entry name" value="FeoB_Cyto"/>
</dbReference>
<dbReference type="InterPro" id="IPR050860">
    <property type="entry name" value="FeoB_GTPase"/>
</dbReference>
<dbReference type="InterPro" id="IPR030389">
    <property type="entry name" value="G_FEOB_dom"/>
</dbReference>
<dbReference type="InterPro" id="IPR011642">
    <property type="entry name" value="Gate_dom"/>
</dbReference>
<dbReference type="InterPro" id="IPR027417">
    <property type="entry name" value="P-loop_NTPase"/>
</dbReference>
<dbReference type="NCBIfam" id="TIGR00437">
    <property type="entry name" value="feoB"/>
    <property type="match status" value="1"/>
</dbReference>
<dbReference type="NCBIfam" id="NF007105">
    <property type="entry name" value="PRK09554.1"/>
    <property type="match status" value="1"/>
</dbReference>
<dbReference type="PANTHER" id="PTHR43185:SF1">
    <property type="entry name" value="FE(2+) TRANSPORTER FEOB"/>
    <property type="match status" value="1"/>
</dbReference>
<dbReference type="PANTHER" id="PTHR43185">
    <property type="entry name" value="FERROUS IRON TRANSPORT PROTEIN B"/>
    <property type="match status" value="1"/>
</dbReference>
<dbReference type="Pfam" id="PF07664">
    <property type="entry name" value="FeoB_C"/>
    <property type="match status" value="1"/>
</dbReference>
<dbReference type="Pfam" id="PF17910">
    <property type="entry name" value="FeoB_Cyto"/>
    <property type="match status" value="1"/>
</dbReference>
<dbReference type="Pfam" id="PF02421">
    <property type="entry name" value="FeoB_N"/>
    <property type="match status" value="1"/>
</dbReference>
<dbReference type="Pfam" id="PF07670">
    <property type="entry name" value="Gate"/>
    <property type="match status" value="2"/>
</dbReference>
<dbReference type="SUPFAM" id="SSF52540">
    <property type="entry name" value="P-loop containing nucleoside triphosphate hydrolases"/>
    <property type="match status" value="1"/>
</dbReference>
<dbReference type="PROSITE" id="PS51711">
    <property type="entry name" value="G_FEOB"/>
    <property type="match status" value="1"/>
</dbReference>
<organism>
    <name type="scientific">Escherichia coli O157:H7</name>
    <dbReference type="NCBI Taxonomy" id="83334"/>
    <lineage>
        <taxon>Bacteria</taxon>
        <taxon>Pseudomonadati</taxon>
        <taxon>Pseudomonadota</taxon>
        <taxon>Gammaproteobacteria</taxon>
        <taxon>Enterobacterales</taxon>
        <taxon>Enterobacteriaceae</taxon>
        <taxon>Escherichia</taxon>
    </lineage>
</organism>
<keyword id="KW-0997">Cell inner membrane</keyword>
<keyword id="KW-1003">Cell membrane</keyword>
<keyword id="KW-0342">GTP-binding</keyword>
<keyword id="KW-0406">Ion transport</keyword>
<keyword id="KW-0408">Iron</keyword>
<keyword id="KW-0410">Iron transport</keyword>
<keyword id="KW-0472">Membrane</keyword>
<keyword id="KW-0547">Nucleotide-binding</keyword>
<keyword id="KW-1185">Reference proteome</keyword>
<keyword id="KW-0812">Transmembrane</keyword>
<keyword id="KW-1133">Transmembrane helix</keyword>
<keyword id="KW-0813">Transport</keyword>
<sequence length="773" mass="84444">MKKLTIGLIGNPNSGKTTLFNQLTGARQRVGNWAGVTVERKEGQFSTTDHQVTLVDLPGTYSLTTISSQTSLDEQIACHYILSGDADLLINVVDASNLERNLYLTLQLLELGIPCIVALNMLDIAEKQNIRIEIDALSARLGCPVIPLVSTRGRGIEALKLAIDRYKANENVELVHYAQPLLNEADSLAKVMPSDIPLKQRRWLGLQMLEGDIYSRAYAGEASQHLDAALARLRNEMDDPALHIADARYQCIAAICDVVSNTLTAEPSRFTTAVDKIVLNRFLGLPIFLFVMYLMFLLAINIGGALQPLFDVGSVALFVHGIQWIGYTLHFPDWLTIFLAQGLGGGINTVLPLVPQIGMMYLFLSFLEDSGYMARAAFVMDRLMQALGLPGKSFVPLIVGFGCNVPSVMGARTLDAPRERLMTIMMAPFMSCGARLAIFAVFAAAFFGQNGALAVFSLYMLGIVMAVLTGLMLKYTIMRGEATPFVMELPVYHVPHVKSLIIQTWQRLKGFVLRAGKVIIIVSIFLSAFNSFSLSGKIVDNINDSALASVSRVITPVFKPIGVHEDNWQATVGLFTGAMAKEVVVGTLNTLYTAENIQDEEFNPAEFNLGEELFSAVDETWQSLKDTFSLSVLMNPIEASKGDGEMGTGAMGVMDQKFGSAAAAYSYLIFVLLYVPCISVMGAIARESSRGWMGFSILWGLNIAYSLATLFYQVASYSQHPTYSLVCILAVILFNIVVIGLLRRARSRVDIELLATRKSVSSCCAASTTGDCH</sequence>
<evidence type="ECO:0000250" key="1">
    <source>
        <dbReference type="UniProtKB" id="P33650"/>
    </source>
</evidence>
<evidence type="ECO:0000255" key="2"/>
<evidence type="ECO:0000255" key="3">
    <source>
        <dbReference type="PROSITE-ProRule" id="PRU01048"/>
    </source>
</evidence>
<evidence type="ECO:0000305" key="4"/>
<reference key="1">
    <citation type="journal article" date="2001" name="Nature">
        <title>Genome sequence of enterohaemorrhagic Escherichia coli O157:H7.</title>
        <authorList>
            <person name="Perna N.T."/>
            <person name="Plunkett G. III"/>
            <person name="Burland V."/>
            <person name="Mau B."/>
            <person name="Glasner J.D."/>
            <person name="Rose D.J."/>
            <person name="Mayhew G.F."/>
            <person name="Evans P.S."/>
            <person name="Gregor J."/>
            <person name="Kirkpatrick H.A."/>
            <person name="Posfai G."/>
            <person name="Hackett J."/>
            <person name="Klink S."/>
            <person name="Boutin A."/>
            <person name="Shao Y."/>
            <person name="Miller L."/>
            <person name="Grotbeck E.J."/>
            <person name="Davis N.W."/>
            <person name="Lim A."/>
            <person name="Dimalanta E.T."/>
            <person name="Potamousis K."/>
            <person name="Apodaca J."/>
            <person name="Anantharaman T.S."/>
            <person name="Lin J."/>
            <person name="Yen G."/>
            <person name="Schwartz D.C."/>
            <person name="Welch R.A."/>
            <person name="Blattner F.R."/>
        </authorList>
    </citation>
    <scope>NUCLEOTIDE SEQUENCE [LARGE SCALE GENOMIC DNA]</scope>
    <source>
        <strain>O157:H7 / EDL933 / ATCC 700927 / EHEC</strain>
    </source>
</reference>
<reference key="2">
    <citation type="journal article" date="2001" name="DNA Res.">
        <title>Complete genome sequence of enterohemorrhagic Escherichia coli O157:H7 and genomic comparison with a laboratory strain K-12.</title>
        <authorList>
            <person name="Hayashi T."/>
            <person name="Makino K."/>
            <person name="Ohnishi M."/>
            <person name="Kurokawa K."/>
            <person name="Ishii K."/>
            <person name="Yokoyama K."/>
            <person name="Han C.-G."/>
            <person name="Ohtsubo E."/>
            <person name="Nakayama K."/>
            <person name="Murata T."/>
            <person name="Tanaka M."/>
            <person name="Tobe T."/>
            <person name="Iida T."/>
            <person name="Takami H."/>
            <person name="Honda T."/>
            <person name="Sasakawa C."/>
            <person name="Ogasawara N."/>
            <person name="Yasunaga T."/>
            <person name="Kuhara S."/>
            <person name="Shiba T."/>
            <person name="Hattori M."/>
            <person name="Shinagawa H."/>
        </authorList>
    </citation>
    <scope>NUCLEOTIDE SEQUENCE [LARGE SCALE GENOMIC DNA]</scope>
    <source>
        <strain>O157:H7 / Sakai / RIMD 0509952 / EHEC</strain>
    </source>
</reference>
<name>FEOB_ECO57</name>